<reference key="1">
    <citation type="journal article" date="1995" name="Cell">
        <title>OBF-1, a novel B cell-specific coactivator that stimulates immunoglobulin promoter activity through association with octamer-binding proteins.</title>
        <authorList>
            <person name="Strubin M."/>
            <person name="Newell J.W."/>
            <person name="Matthias P."/>
        </authorList>
    </citation>
    <scope>NUCLEOTIDE SEQUENCE [MRNA]</scope>
    <scope>FUNCTION</scope>
    <scope>TISSUE SPECIFICITY</scope>
    <scope>INTERACTION WITH POU2F1 AND POU2F2</scope>
    <source>
        <tissue>Spleen</tissue>
    </source>
</reference>
<reference key="2">
    <citation type="journal article" date="1995" name="Nature">
        <title>A B-cell coactivator of octamer-binding transcription factors.</title>
        <authorList>
            <person name="Gstaiger M."/>
            <person name="Knoepfel L."/>
            <person name="Georgiev O."/>
            <person name="Schaffner W."/>
            <person name="Hovens C.M."/>
        </authorList>
    </citation>
    <scope>NUCLEOTIDE SEQUENCE [MRNA]</scope>
    <scope>FUNCTION</scope>
    <scope>TISSUE SPECIFICITY</scope>
    <source>
        <tissue>Peripheral blood lymphocyte</tissue>
    </source>
</reference>
<reference key="3">
    <citation type="journal article" date="1995" name="C. R. Acad. Sci. III, Sci. Vie">
        <title>Fusion of the LAZ3/BCL6 and BOB1/OBF1 genes by t(3; 11) (q27; q23) chromosomal translocation.</title>
        <authorList>
            <person name="Galiegue-Zouitina S."/>
            <person name="Quief S."/>
            <person name="Hildebrand M.-P."/>
            <person name="Denis C."/>
            <person name="Lecocq G."/>
            <person name="Collyn-D'Hooghe M."/>
            <person name="Bastard C."/>
            <person name="Yuille M."/>
            <person name="Dyer M.J."/>
            <person name="Kerckaert J.-P."/>
        </authorList>
    </citation>
    <scope>NUCLEOTIDE SEQUENCE [MRNA]</scope>
    <scope>CHROMOSOMAL TRANSLOCATION WITH BCL6</scope>
    <source>
        <tissue>Lymphoma</tissue>
    </source>
</reference>
<reference key="4">
    <citation type="journal article" date="1995" name="Mol. Cell. Biol.">
        <title>Cloning, functional characterization, and mechanism of action of the B-cell-specific transcriptional coactivator OCA-B.</title>
        <authorList>
            <person name="Luo Y."/>
            <person name="Roeder R.G."/>
        </authorList>
    </citation>
    <scope>NUCLEOTIDE SEQUENCE [MRNA]</scope>
    <scope>PROTEIN SEQUENCE OF 1-27 AND 235-256</scope>
    <scope>FUNCTION</scope>
</reference>
<reference key="5">
    <citation type="journal article" date="2004" name="Nat. Genet.">
        <title>Complete sequencing and characterization of 21,243 full-length human cDNAs.</title>
        <authorList>
            <person name="Ota T."/>
            <person name="Suzuki Y."/>
            <person name="Nishikawa T."/>
            <person name="Otsuki T."/>
            <person name="Sugiyama T."/>
            <person name="Irie R."/>
            <person name="Wakamatsu A."/>
            <person name="Hayashi K."/>
            <person name="Sato H."/>
            <person name="Nagai K."/>
            <person name="Kimura K."/>
            <person name="Makita H."/>
            <person name="Sekine M."/>
            <person name="Obayashi M."/>
            <person name="Nishi T."/>
            <person name="Shibahara T."/>
            <person name="Tanaka T."/>
            <person name="Ishii S."/>
            <person name="Yamamoto J."/>
            <person name="Saito K."/>
            <person name="Kawai Y."/>
            <person name="Isono Y."/>
            <person name="Nakamura Y."/>
            <person name="Nagahari K."/>
            <person name="Murakami K."/>
            <person name="Yasuda T."/>
            <person name="Iwayanagi T."/>
            <person name="Wagatsuma M."/>
            <person name="Shiratori A."/>
            <person name="Sudo H."/>
            <person name="Hosoiri T."/>
            <person name="Kaku Y."/>
            <person name="Kodaira H."/>
            <person name="Kondo H."/>
            <person name="Sugawara M."/>
            <person name="Takahashi M."/>
            <person name="Kanda K."/>
            <person name="Yokoi T."/>
            <person name="Furuya T."/>
            <person name="Kikkawa E."/>
            <person name="Omura Y."/>
            <person name="Abe K."/>
            <person name="Kamihara K."/>
            <person name="Katsuta N."/>
            <person name="Sato K."/>
            <person name="Tanikawa M."/>
            <person name="Yamazaki M."/>
            <person name="Ninomiya K."/>
            <person name="Ishibashi T."/>
            <person name="Yamashita H."/>
            <person name="Murakawa K."/>
            <person name="Fujimori K."/>
            <person name="Tanai H."/>
            <person name="Kimata M."/>
            <person name="Watanabe M."/>
            <person name="Hiraoka S."/>
            <person name="Chiba Y."/>
            <person name="Ishida S."/>
            <person name="Ono Y."/>
            <person name="Takiguchi S."/>
            <person name="Watanabe S."/>
            <person name="Yosida M."/>
            <person name="Hotuta T."/>
            <person name="Kusano J."/>
            <person name="Kanehori K."/>
            <person name="Takahashi-Fujii A."/>
            <person name="Hara H."/>
            <person name="Tanase T.-O."/>
            <person name="Nomura Y."/>
            <person name="Togiya S."/>
            <person name="Komai F."/>
            <person name="Hara R."/>
            <person name="Takeuchi K."/>
            <person name="Arita M."/>
            <person name="Imose N."/>
            <person name="Musashino K."/>
            <person name="Yuuki H."/>
            <person name="Oshima A."/>
            <person name="Sasaki N."/>
            <person name="Aotsuka S."/>
            <person name="Yoshikawa Y."/>
            <person name="Matsunawa H."/>
            <person name="Ichihara T."/>
            <person name="Shiohata N."/>
            <person name="Sano S."/>
            <person name="Moriya S."/>
            <person name="Momiyama H."/>
            <person name="Satoh N."/>
            <person name="Takami S."/>
            <person name="Terashima Y."/>
            <person name="Suzuki O."/>
            <person name="Nakagawa S."/>
            <person name="Senoh A."/>
            <person name="Mizoguchi H."/>
            <person name="Goto Y."/>
            <person name="Shimizu F."/>
            <person name="Wakebe H."/>
            <person name="Hishigaki H."/>
            <person name="Watanabe T."/>
            <person name="Sugiyama A."/>
            <person name="Takemoto M."/>
            <person name="Kawakami B."/>
            <person name="Yamazaki M."/>
            <person name="Watanabe K."/>
            <person name="Kumagai A."/>
            <person name="Itakura S."/>
            <person name="Fukuzumi Y."/>
            <person name="Fujimori Y."/>
            <person name="Komiyama M."/>
            <person name="Tashiro H."/>
            <person name="Tanigami A."/>
            <person name="Fujiwara T."/>
            <person name="Ono T."/>
            <person name="Yamada K."/>
            <person name="Fujii Y."/>
            <person name="Ozaki K."/>
            <person name="Hirao M."/>
            <person name="Ohmori Y."/>
            <person name="Kawabata A."/>
            <person name="Hikiji T."/>
            <person name="Kobatake N."/>
            <person name="Inagaki H."/>
            <person name="Ikema Y."/>
            <person name="Okamoto S."/>
            <person name="Okitani R."/>
            <person name="Kawakami T."/>
            <person name="Noguchi S."/>
            <person name="Itoh T."/>
            <person name="Shigeta K."/>
            <person name="Senba T."/>
            <person name="Matsumura K."/>
            <person name="Nakajima Y."/>
            <person name="Mizuno T."/>
            <person name="Morinaga M."/>
            <person name="Sasaki M."/>
            <person name="Togashi T."/>
            <person name="Oyama M."/>
            <person name="Hata H."/>
            <person name="Watanabe M."/>
            <person name="Komatsu T."/>
            <person name="Mizushima-Sugano J."/>
            <person name="Satoh T."/>
            <person name="Shirai Y."/>
            <person name="Takahashi Y."/>
            <person name="Nakagawa K."/>
            <person name="Okumura K."/>
            <person name="Nagase T."/>
            <person name="Nomura N."/>
            <person name="Kikuchi H."/>
            <person name="Masuho Y."/>
            <person name="Yamashita R."/>
            <person name="Nakai K."/>
            <person name="Yada T."/>
            <person name="Nakamura Y."/>
            <person name="Ohara O."/>
            <person name="Isogai T."/>
            <person name="Sugano S."/>
        </authorList>
    </citation>
    <scope>NUCLEOTIDE SEQUENCE [LARGE SCALE MRNA]</scope>
    <source>
        <tissue>Small intestine</tissue>
    </source>
</reference>
<reference key="6">
    <citation type="submission" date="2005-07" db="EMBL/GenBank/DDBJ databases">
        <authorList>
            <person name="Mural R.J."/>
            <person name="Istrail S."/>
            <person name="Sutton G.G."/>
            <person name="Florea L."/>
            <person name="Halpern A.L."/>
            <person name="Mobarry C.M."/>
            <person name="Lippert R."/>
            <person name="Walenz B."/>
            <person name="Shatkay H."/>
            <person name="Dew I."/>
            <person name="Miller J.R."/>
            <person name="Flanigan M.J."/>
            <person name="Edwards N.J."/>
            <person name="Bolanos R."/>
            <person name="Fasulo D."/>
            <person name="Halldorsson B.V."/>
            <person name="Hannenhalli S."/>
            <person name="Turner R."/>
            <person name="Yooseph S."/>
            <person name="Lu F."/>
            <person name="Nusskern D.R."/>
            <person name="Shue B.C."/>
            <person name="Zheng X.H."/>
            <person name="Zhong F."/>
            <person name="Delcher A.L."/>
            <person name="Huson D.H."/>
            <person name="Kravitz S.A."/>
            <person name="Mouchard L."/>
            <person name="Reinert K."/>
            <person name="Remington K.A."/>
            <person name="Clark A.G."/>
            <person name="Waterman M.S."/>
            <person name="Eichler E.E."/>
            <person name="Adams M.D."/>
            <person name="Hunkapiller M.W."/>
            <person name="Myers E.W."/>
            <person name="Venter J.C."/>
        </authorList>
    </citation>
    <scope>NUCLEOTIDE SEQUENCE [LARGE SCALE GENOMIC DNA]</scope>
</reference>
<reference key="7">
    <citation type="journal article" date="2004" name="Genome Res.">
        <title>The status, quality, and expansion of the NIH full-length cDNA project: the Mammalian Gene Collection (MGC).</title>
        <authorList>
            <consortium name="The MGC Project Team"/>
        </authorList>
    </citation>
    <scope>NUCLEOTIDE SEQUENCE [LARGE SCALE MRNA]</scope>
    <source>
        <tissue>Lymph</tissue>
    </source>
</reference>
<reference key="8">
    <citation type="journal article" date="2001" name="EMBO J.">
        <title>The RING finger protein Siah-1 regulates the level of the transcriptional coactivator OBF-1.</title>
        <authorList>
            <person name="Tiedt R."/>
            <person name="Bartholdy B.A."/>
            <person name="Matthias G."/>
            <person name="Newell J.W."/>
            <person name="Matthias P."/>
        </authorList>
    </citation>
    <scope>INTERACTION WITH SIAH1</scope>
    <scope>DEGRADATION</scope>
</reference>
<reference key="9">
    <citation type="journal article" date="2001" name="EMBO J.">
        <title>Regulation of BOB.1/OBF.1 stability by SIAH.</title>
        <authorList>
            <person name="Boehm J."/>
            <person name="He Y."/>
            <person name="Greiner A."/>
            <person name="Staudt L."/>
            <person name="Wirth T."/>
        </authorList>
    </citation>
    <scope>INTERACTION WITH SIAH1 AND SIAH2</scope>
    <scope>DEGRADATION</scope>
</reference>
<reference key="10">
    <citation type="journal article" date="1999" name="Genes Dev.">
        <title>Crystal structure of an OCA-B peptide bound to an Oct-1 POU domain/octamer DNA complex: specific recognition of a protein-DNA interface.</title>
        <authorList>
            <person name="Chasman D."/>
            <person name="Cepek K."/>
            <person name="Sharp P.A."/>
            <person name="Pabo C.O."/>
        </authorList>
    </citation>
    <scope>X-RAY CRYSTALLOGRAPHY (3.2 ANGSTROMS) OF 1-44 IN COMPLEX WITH POU2F1 AND DNA</scope>
</reference>
<reference key="11">
    <citation type="journal article" date="2022" name="Nature">
        <title>OCA-T1 and OCA-T2 are coactivators of POU2F3 in the tuft cell lineage.</title>
        <authorList>
            <person name="Wu X.S."/>
            <person name="He X.Y."/>
            <person name="Ipsaro J.J."/>
            <person name="Huang Y.H."/>
            <person name="Preall J.B."/>
            <person name="Ng D."/>
            <person name="Shue Y.T."/>
            <person name="Sage J."/>
            <person name="Egeblad M."/>
            <person name="Joshua-Tor L."/>
            <person name="Vakoc C.R."/>
        </authorList>
    </citation>
    <scope>OCA DOMAIN</scope>
</reference>
<dbReference type="EMBL" id="Z47550">
    <property type="protein sequence ID" value="CAA87630.1"/>
    <property type="molecule type" value="mRNA"/>
</dbReference>
<dbReference type="EMBL" id="X83504">
    <property type="protein sequence ID" value="CAA58494.1"/>
    <property type="molecule type" value="mRNA"/>
</dbReference>
<dbReference type="EMBL" id="Z49194">
    <property type="protein sequence ID" value="CAA89053.1"/>
    <property type="molecule type" value="mRNA"/>
</dbReference>
<dbReference type="EMBL" id="AK313573">
    <property type="protein sequence ID" value="BAG36346.1"/>
    <property type="molecule type" value="mRNA"/>
</dbReference>
<dbReference type="EMBL" id="CH471065">
    <property type="protein sequence ID" value="EAW67137.1"/>
    <property type="molecule type" value="Genomic_DNA"/>
</dbReference>
<dbReference type="EMBL" id="BC032549">
    <property type="protein sequence ID" value="AAH32549.1"/>
    <property type="molecule type" value="mRNA"/>
</dbReference>
<dbReference type="CCDS" id="CCDS31675.1"/>
<dbReference type="PIR" id="A55652">
    <property type="entry name" value="A55652"/>
</dbReference>
<dbReference type="RefSeq" id="NP_006226.2">
    <property type="nucleotide sequence ID" value="NM_006235.3"/>
</dbReference>
<dbReference type="PDB" id="1CQT">
    <property type="method" value="X-ray"/>
    <property type="resolution" value="3.20 A"/>
    <property type="chains" value="I/J=1-44"/>
</dbReference>
<dbReference type="PDBsum" id="1CQT"/>
<dbReference type="SMR" id="Q16633"/>
<dbReference type="BioGRID" id="111446">
    <property type="interactions" value="85"/>
</dbReference>
<dbReference type="CORUM" id="Q16633"/>
<dbReference type="ELM" id="Q16633"/>
<dbReference type="FunCoup" id="Q16633">
    <property type="interactions" value="244"/>
</dbReference>
<dbReference type="IntAct" id="Q16633">
    <property type="interactions" value="50"/>
</dbReference>
<dbReference type="STRING" id="9606.ENSP00000376786"/>
<dbReference type="GlyCosmos" id="Q16633">
    <property type="glycosylation" value="1 site, 1 glycan"/>
</dbReference>
<dbReference type="GlyGen" id="Q16633">
    <property type="glycosylation" value="3 sites, 1 O-linked glycan (1 site)"/>
</dbReference>
<dbReference type="iPTMnet" id="Q16633"/>
<dbReference type="PhosphoSitePlus" id="Q16633"/>
<dbReference type="BioMuta" id="POU2AF1"/>
<dbReference type="DMDM" id="2833276"/>
<dbReference type="MassIVE" id="Q16633"/>
<dbReference type="PaxDb" id="9606-ENSP00000376786"/>
<dbReference type="PeptideAtlas" id="Q16633"/>
<dbReference type="ProteomicsDB" id="60982"/>
<dbReference type="Antibodypedia" id="4401">
    <property type="antibodies" value="703 antibodies from 40 providers"/>
</dbReference>
<dbReference type="DNASU" id="5450"/>
<dbReference type="Ensembl" id="ENST00000393067.8">
    <property type="protein sequence ID" value="ENSP00000376786.3"/>
    <property type="gene ID" value="ENSG00000110777.12"/>
</dbReference>
<dbReference type="GeneID" id="5450"/>
<dbReference type="KEGG" id="hsa:5450"/>
<dbReference type="MANE-Select" id="ENST00000393067.8">
    <property type="protein sequence ID" value="ENSP00000376786.3"/>
    <property type="RefSeq nucleotide sequence ID" value="NM_006235.3"/>
    <property type="RefSeq protein sequence ID" value="NP_006226.2"/>
</dbReference>
<dbReference type="UCSC" id="uc001plg.5">
    <property type="organism name" value="human"/>
</dbReference>
<dbReference type="AGR" id="HGNC:9211"/>
<dbReference type="CTD" id="5450"/>
<dbReference type="DisGeNET" id="5450"/>
<dbReference type="GeneCards" id="POU2AF1"/>
<dbReference type="HGNC" id="HGNC:9211">
    <property type="gene designation" value="POU2AF1"/>
</dbReference>
<dbReference type="HPA" id="ENSG00000110777">
    <property type="expression patterns" value="Group enriched (intestine, lymphoid tissue, stomach)"/>
</dbReference>
<dbReference type="MalaCards" id="POU2AF1"/>
<dbReference type="MIM" id="601206">
    <property type="type" value="gene"/>
</dbReference>
<dbReference type="neXtProt" id="NX_Q16633"/>
<dbReference type="OpenTargets" id="ENSG00000110777"/>
<dbReference type="Orphanet" id="186">
    <property type="disease" value="Primary biliary cholangitis"/>
</dbReference>
<dbReference type="PharmGKB" id="PA33535"/>
<dbReference type="VEuPathDB" id="HostDB:ENSG00000110777"/>
<dbReference type="eggNOG" id="ENOG502R5JD">
    <property type="taxonomic scope" value="Eukaryota"/>
</dbReference>
<dbReference type="GeneTree" id="ENSGT00390000017499"/>
<dbReference type="HOGENOM" id="CLU_095920_0_0_1"/>
<dbReference type="InParanoid" id="Q16633"/>
<dbReference type="OMA" id="SPIGQPC"/>
<dbReference type="OrthoDB" id="194358at2759"/>
<dbReference type="PAN-GO" id="Q16633">
    <property type="GO annotations" value="3 GO annotations based on evolutionary models"/>
</dbReference>
<dbReference type="PhylomeDB" id="Q16633"/>
<dbReference type="TreeFam" id="TF332565"/>
<dbReference type="PathwayCommons" id="Q16633"/>
<dbReference type="SignaLink" id="Q16633"/>
<dbReference type="SIGNOR" id="Q16633"/>
<dbReference type="BioGRID-ORCS" id="5450">
    <property type="hits" value="27 hits in 1156 CRISPR screens"/>
</dbReference>
<dbReference type="ChiTaRS" id="POU2AF1">
    <property type="organism name" value="human"/>
</dbReference>
<dbReference type="EvolutionaryTrace" id="Q16633"/>
<dbReference type="GeneWiki" id="POU2AF1"/>
<dbReference type="GenomeRNAi" id="5450"/>
<dbReference type="Pharos" id="Q16633">
    <property type="development level" value="Tbio"/>
</dbReference>
<dbReference type="PRO" id="PR:Q16633"/>
<dbReference type="Proteomes" id="UP000005640">
    <property type="component" value="Chromosome 11"/>
</dbReference>
<dbReference type="RNAct" id="Q16633">
    <property type="molecule type" value="protein"/>
</dbReference>
<dbReference type="Bgee" id="ENSG00000110777">
    <property type="expression patterns" value="Expressed in epithelium of nasopharynx and 152 other cell types or tissues"/>
</dbReference>
<dbReference type="ExpressionAtlas" id="Q16633">
    <property type="expression patterns" value="baseline and differential"/>
</dbReference>
<dbReference type="GO" id="GO:0090575">
    <property type="term" value="C:RNA polymerase II transcription regulator complex"/>
    <property type="evidence" value="ECO:0000314"/>
    <property type="project" value="CAFA"/>
</dbReference>
<dbReference type="GO" id="GO:0003677">
    <property type="term" value="F:DNA binding"/>
    <property type="evidence" value="ECO:0007669"/>
    <property type="project" value="Ensembl"/>
</dbReference>
<dbReference type="GO" id="GO:0070974">
    <property type="term" value="F:POU domain binding"/>
    <property type="evidence" value="ECO:0007669"/>
    <property type="project" value="InterPro"/>
</dbReference>
<dbReference type="GO" id="GO:0003713">
    <property type="term" value="F:transcription coactivator activity"/>
    <property type="evidence" value="ECO:0000315"/>
    <property type="project" value="CAFA"/>
</dbReference>
<dbReference type="GO" id="GO:0003712">
    <property type="term" value="F:transcription coregulator activity"/>
    <property type="evidence" value="ECO:0000304"/>
    <property type="project" value="ProtInc"/>
</dbReference>
<dbReference type="GO" id="GO:0098586">
    <property type="term" value="P:cellular response to virus"/>
    <property type="evidence" value="ECO:0000250"/>
    <property type="project" value="UniProtKB"/>
</dbReference>
<dbReference type="GO" id="GO:0002314">
    <property type="term" value="P:germinal center B cell differentiation"/>
    <property type="evidence" value="ECO:0000250"/>
    <property type="project" value="UniProtKB"/>
</dbReference>
<dbReference type="GO" id="GO:0006959">
    <property type="term" value="P:humoral immune response"/>
    <property type="evidence" value="ECO:0000304"/>
    <property type="project" value="ProtInc"/>
</dbReference>
<dbReference type="GO" id="GO:0032755">
    <property type="term" value="P:positive regulation of interleukin-6 production"/>
    <property type="evidence" value="ECO:0000250"/>
    <property type="project" value="UniProtKB"/>
</dbReference>
<dbReference type="GO" id="GO:0045944">
    <property type="term" value="P:positive regulation of transcription by RNA polymerase II"/>
    <property type="evidence" value="ECO:0000316"/>
    <property type="project" value="CAFA"/>
</dbReference>
<dbReference type="IDEAL" id="IID00175"/>
<dbReference type="InterPro" id="IPR047571">
    <property type="entry name" value="OCA"/>
</dbReference>
<dbReference type="InterPro" id="IPR015389">
    <property type="entry name" value="PD-C2-AF1"/>
</dbReference>
<dbReference type="PANTHER" id="PTHR15363">
    <property type="entry name" value="POU DOMAIN CLASS 2-ASSOCIATING FACTOR 1"/>
    <property type="match status" value="1"/>
</dbReference>
<dbReference type="PANTHER" id="PTHR15363:SF3">
    <property type="entry name" value="POU DOMAIN CLASS 2-ASSOCIATING FACTOR 1"/>
    <property type="match status" value="1"/>
</dbReference>
<dbReference type="Pfam" id="PF09310">
    <property type="entry name" value="PD-C2-AF1"/>
    <property type="match status" value="1"/>
</dbReference>
<dbReference type="PROSITE" id="PS52003">
    <property type="entry name" value="OCA"/>
    <property type="match status" value="1"/>
</dbReference>
<evidence type="ECO:0000250" key="1">
    <source>
        <dbReference type="UniProtKB" id="Q64693"/>
    </source>
</evidence>
<evidence type="ECO:0000255" key="2">
    <source>
        <dbReference type="PROSITE-ProRule" id="PRU01347"/>
    </source>
</evidence>
<evidence type="ECO:0000256" key="3">
    <source>
        <dbReference type="SAM" id="MobiDB-lite"/>
    </source>
</evidence>
<evidence type="ECO:0000269" key="4">
    <source>
    </source>
</evidence>
<evidence type="ECO:0000269" key="5">
    <source>
    </source>
</evidence>
<evidence type="ECO:0000269" key="6">
    <source>
    </source>
</evidence>
<evidence type="ECO:0000269" key="7">
    <source>
    </source>
</evidence>
<evidence type="ECO:0000269" key="8">
    <source>
    </source>
</evidence>
<evidence type="ECO:0000303" key="9">
    <source>
    </source>
</evidence>
<evidence type="ECO:0000303" key="10">
    <source>
    </source>
</evidence>
<evidence type="ECO:0000305" key="11"/>
<evidence type="ECO:0000305" key="12">
    <source>
    </source>
</evidence>
<evidence type="ECO:0000312" key="13">
    <source>
        <dbReference type="HGNC" id="HGNC:9211"/>
    </source>
</evidence>
<evidence type="ECO:0007829" key="14">
    <source>
        <dbReference type="PDB" id="1CQT"/>
    </source>
</evidence>
<gene>
    <name evidence="13" type="primary">POU2AF1</name>
    <name evidence="9" type="synonym">BOB1</name>
    <name evidence="10" type="synonym">OBF1</name>
</gene>
<protein>
    <recommendedName>
        <fullName evidence="11">POU domain class 2-associating factor 1</fullName>
    </recommendedName>
    <alternativeName>
        <fullName>B-cell-specific coactivator OBF-1</fullName>
    </alternativeName>
    <alternativeName>
        <fullName evidence="9">BOB-1</fullName>
    </alternativeName>
    <alternativeName>
        <fullName>OCA-B</fullName>
    </alternativeName>
    <alternativeName>
        <fullName>OCT-binding factor 1</fullName>
    </alternativeName>
</protein>
<organism>
    <name type="scientific">Homo sapiens</name>
    <name type="common">Human</name>
    <dbReference type="NCBI Taxonomy" id="9606"/>
    <lineage>
        <taxon>Eukaryota</taxon>
        <taxon>Metazoa</taxon>
        <taxon>Chordata</taxon>
        <taxon>Craniata</taxon>
        <taxon>Vertebrata</taxon>
        <taxon>Euteleostomi</taxon>
        <taxon>Mammalia</taxon>
        <taxon>Eutheria</taxon>
        <taxon>Euarchontoglires</taxon>
        <taxon>Primates</taxon>
        <taxon>Haplorrhini</taxon>
        <taxon>Catarrhini</taxon>
        <taxon>Hominidae</taxon>
        <taxon>Homo</taxon>
    </lineage>
</organism>
<comment type="function">
    <text evidence="1 5 6 7">Transcriptional coactivator that specifically associates with either POU2F1/OCT1 or POU2F2/OCT2 (PubMed:7859290). It boosts the POU2F1/OCT1 mediated promoter activity and to a lesser extent, that of POU2F2/OCT2 (PubMed:7779176). It recognizes the POU domains of POU2F1/OCT1 and POU2F2/OCT2 (PubMed:7779176). It is essential for the response of B-cells to antigens and required for the formation of germinal centers (PubMed:7623806, PubMed:7859290). Regulates IL6 expression in B cells as POU2F2/OCT2 coactivator (By similarity).</text>
</comment>
<comment type="subunit">
    <text evidence="7">Interacts with POU2F1/OCT1 and POU2F2/OCT2; the interaction increases POU2F1 and POU2F2 transactivation activity.</text>
</comment>
<comment type="interaction">
    <interactant intactId="EBI-943588">
        <id>Q16633</id>
    </interactant>
    <interactant intactId="EBI-1043378">
        <id>O95260</id>
        <label>ATE1</label>
    </interactant>
    <organismsDiffer>false</organismsDiffer>
    <experiments>2</experiments>
</comment>
<comment type="interaction">
    <interactant intactId="EBI-943588">
        <id>Q16633</id>
    </interactant>
    <interactant intactId="EBI-744556">
        <id>Q96HB5</id>
        <label>CCDC120</label>
    </interactant>
    <organismsDiffer>false</organismsDiffer>
    <experiments>3</experiments>
</comment>
<comment type="interaction">
    <interactant intactId="EBI-943588">
        <id>Q16633</id>
    </interactant>
    <interactant intactId="EBI-12160437">
        <id>A8MTA8-2</id>
        <label>CIMIP2B</label>
    </interactant>
    <organismsDiffer>false</organismsDiffer>
    <experiments>3</experiments>
</comment>
<comment type="interaction">
    <interactant intactId="EBI-943588">
        <id>Q16633</id>
    </interactant>
    <interactant intactId="EBI-742953">
        <id>Q9BY27</id>
        <label>DGCR6L</label>
    </interactant>
    <organismsDiffer>false</organismsDiffer>
    <experiments>3</experiments>
</comment>
<comment type="interaction">
    <interactant intactId="EBI-943588">
        <id>Q16633</id>
    </interactant>
    <interactant intactId="EBI-17282008">
        <id>O60548</id>
        <label>FOXD2</label>
    </interactant>
    <organismsDiffer>false</organismsDiffer>
    <experiments>3</experiments>
</comment>
<comment type="interaction">
    <interactant intactId="EBI-943588">
        <id>Q16633</id>
    </interactant>
    <interactant intactId="EBI-713355">
        <id>Q13227</id>
        <label>GPS2</label>
    </interactant>
    <organismsDiffer>false</organismsDiffer>
    <experiments>3</experiments>
</comment>
<comment type="interaction">
    <interactant intactId="EBI-943588">
        <id>Q16633</id>
    </interactant>
    <interactant intactId="EBI-10329202">
        <id>Q9Y5R4</id>
        <label>HEMK1</label>
    </interactant>
    <organismsDiffer>false</organismsDiffer>
    <experiments>3</experiments>
</comment>
<comment type="interaction">
    <interactant intactId="EBI-943588">
        <id>Q16633</id>
    </interactant>
    <interactant intactId="EBI-740220">
        <id>O14964</id>
        <label>HGS</label>
    </interactant>
    <organismsDiffer>false</organismsDiffer>
    <experiments>5</experiments>
</comment>
<comment type="interaction">
    <interactant intactId="EBI-943588">
        <id>Q16633</id>
    </interactant>
    <interactant intactId="EBI-1752118">
        <id>P31273</id>
        <label>HOXC8</label>
    </interactant>
    <organismsDiffer>false</organismsDiffer>
    <experiments>3</experiments>
</comment>
<comment type="interaction">
    <interactant intactId="EBI-943588">
        <id>Q16633</id>
    </interactant>
    <interactant intactId="EBI-1779423">
        <id>P31274</id>
        <label>HOXC9</label>
    </interactant>
    <organismsDiffer>false</organismsDiffer>
    <experiments>3</experiments>
</comment>
<comment type="interaction">
    <interactant intactId="EBI-943588">
        <id>Q16633</id>
    </interactant>
    <interactant intactId="EBI-11051601">
        <id>P16144-2</id>
        <label>ITGB4</label>
    </interactant>
    <organismsDiffer>false</organismsDiffer>
    <experiments>3</experiments>
</comment>
<comment type="interaction">
    <interactant intactId="EBI-943588">
        <id>Q16633</id>
    </interactant>
    <interactant intactId="EBI-6426443">
        <id>Q2WGJ6</id>
        <label>KLHL38</label>
    </interactant>
    <organismsDiffer>false</organismsDiffer>
    <experiments>3</experiments>
</comment>
<comment type="interaction">
    <interactant intactId="EBI-943588">
        <id>Q16633</id>
    </interactant>
    <interactant intactId="EBI-10210845">
        <id>P59990</id>
        <label>KRTAP12-1</label>
    </interactant>
    <organismsDiffer>false</organismsDiffer>
    <experiments>3</experiments>
</comment>
<comment type="interaction">
    <interactant intactId="EBI-943588">
        <id>Q16633</id>
    </interactant>
    <interactant intactId="EBI-11953846">
        <id>Q52LG2</id>
        <label>KRTAP13-2</label>
    </interactant>
    <organismsDiffer>false</organismsDiffer>
    <experiments>3</experiments>
</comment>
<comment type="interaction">
    <interactant intactId="EBI-943588">
        <id>Q16633</id>
    </interactant>
    <interactant intactId="EBI-11992140">
        <id>Q3LI76</id>
        <label>KRTAP15-1</label>
    </interactant>
    <organismsDiffer>false</organismsDiffer>
    <experiments>3</experiments>
</comment>
<comment type="interaction">
    <interactant intactId="EBI-943588">
        <id>Q16633</id>
    </interactant>
    <interactant intactId="EBI-12020132">
        <id>Q7Z4W3</id>
        <label>KRTAP19-3</label>
    </interactant>
    <organismsDiffer>false</organismsDiffer>
    <experiments>3</experiments>
</comment>
<comment type="interaction">
    <interactant intactId="EBI-943588">
        <id>Q16633</id>
    </interactant>
    <interactant intactId="EBI-1048945">
        <id>Q3LI72</id>
        <label>KRTAP19-5</label>
    </interactant>
    <organismsDiffer>false</organismsDiffer>
    <experiments>3</experiments>
</comment>
<comment type="interaction">
    <interactant intactId="EBI-943588">
        <id>Q16633</id>
    </interactant>
    <interactant intactId="EBI-10241353">
        <id>Q3SYF9</id>
        <label>KRTAP19-7</label>
    </interactant>
    <organismsDiffer>false</organismsDiffer>
    <experiments>3</experiments>
</comment>
<comment type="interaction">
    <interactant intactId="EBI-943588">
        <id>Q16633</id>
    </interactant>
    <interactant intactId="EBI-8025850">
        <id>O14770-4</id>
        <label>MEIS2</label>
    </interactant>
    <organismsDiffer>false</organismsDiffer>
    <experiments>3</experiments>
</comment>
<comment type="interaction">
    <interactant intactId="EBI-943588">
        <id>Q16633</id>
    </interactant>
    <interactant intactId="EBI-2114801">
        <id>Q9BU61</id>
        <label>NDUFAF3</label>
    </interactant>
    <organismsDiffer>false</organismsDiffer>
    <experiments>3</experiments>
</comment>
<comment type="interaction">
    <interactant intactId="EBI-943588">
        <id>Q16633</id>
    </interactant>
    <interactant intactId="EBI-740446">
        <id>P32242</id>
        <label>OTX1</label>
    </interactant>
    <organismsDiffer>false</organismsDiffer>
    <experiments>3</experiments>
</comment>
<comment type="interaction">
    <interactant intactId="EBI-943588">
        <id>Q16633</id>
    </interactant>
    <interactant intactId="EBI-12138495">
        <id>Q99697-2</id>
        <label>PITX2</label>
    </interactant>
    <organismsDiffer>false</organismsDiffer>
    <experiments>3</experiments>
</comment>
<comment type="interaction">
    <interactant intactId="EBI-943588">
        <id>Q16633</id>
    </interactant>
    <interactant intactId="EBI-1389308">
        <id>Q7Z3K3</id>
        <label>POGZ</label>
    </interactant>
    <organismsDiffer>false</organismsDiffer>
    <experiments>3</experiments>
</comment>
<comment type="interaction">
    <interactant intactId="EBI-943588">
        <id>Q16633</id>
    </interactant>
    <interactant intactId="EBI-744023">
        <id>Q9BTL3</id>
        <label>RAMAC</label>
    </interactant>
    <organismsDiffer>false</organismsDiffer>
    <experiments>3</experiments>
</comment>
<comment type="interaction">
    <interactant intactId="EBI-943588">
        <id>Q16633</id>
    </interactant>
    <interactant intactId="EBI-12224445">
        <id>Q9BX46-2</id>
        <label>RBM24</label>
    </interactant>
    <organismsDiffer>false</organismsDiffer>
    <experiments>3</experiments>
</comment>
<comment type="interaction">
    <interactant intactId="EBI-943588">
        <id>Q16633</id>
    </interactant>
    <interactant intactId="EBI-6422642">
        <id>Q01974</id>
        <label>ROR2</label>
    </interactant>
    <organismsDiffer>false</organismsDiffer>
    <experiments>3</experiments>
</comment>
<comment type="interaction">
    <interactant intactId="EBI-943588">
        <id>Q16633</id>
    </interactant>
    <interactant intactId="EBI-745846">
        <id>P57086</id>
        <label>SCAND1</label>
    </interactant>
    <organismsDiffer>false</organismsDiffer>
    <experiments>3</experiments>
</comment>
<comment type="interaction">
    <interactant intactId="EBI-943588">
        <id>Q16633</id>
    </interactant>
    <interactant intactId="EBI-747107">
        <id>Q8IUQ4</id>
        <label>SIAH1</label>
    </interactant>
    <organismsDiffer>false</organismsDiffer>
    <experiments>2</experiments>
</comment>
<comment type="interaction">
    <interactant intactId="EBI-943588">
        <id>Q16633</id>
    </interactant>
    <interactant intactId="EBI-2824328">
        <id>O95947</id>
        <label>TBX6</label>
    </interactant>
    <organismsDiffer>false</organismsDiffer>
    <experiments>3</experiments>
</comment>
<comment type="interaction">
    <interactant intactId="EBI-943588">
        <id>Q16633</id>
    </interactant>
    <interactant intactId="EBI-752030">
        <id>Q96A09</id>
        <label>TENT5B</label>
    </interactant>
    <organismsDiffer>false</organismsDiffer>
    <experiments>3</experiments>
</comment>
<comment type="interaction">
    <interactant intactId="EBI-943588">
        <id>Q16633</id>
    </interactant>
    <interactant intactId="EBI-357061">
        <id>Q92734</id>
        <label>TFG</label>
    </interactant>
    <organismsDiffer>false</organismsDiffer>
    <experiments>3</experiments>
</comment>
<comment type="interaction">
    <interactant intactId="EBI-943588">
        <id>Q16633</id>
    </interactant>
    <interactant intactId="EBI-3939165">
        <id>O43711</id>
        <label>TLX3</label>
    </interactant>
    <organismsDiffer>false</organismsDiffer>
    <experiments>3</experiments>
</comment>
<comment type="interaction">
    <interactant intactId="EBI-943588">
        <id>Q16633</id>
    </interactant>
    <interactant intactId="EBI-743272">
        <id>O75604</id>
        <label>USP2</label>
    </interactant>
    <organismsDiffer>false</organismsDiffer>
    <experiments>3</experiments>
</comment>
<comment type="interaction">
    <interactant intactId="EBI-943588">
        <id>Q16633</id>
    </interactant>
    <interactant intactId="EBI-11957216">
        <id>A8MV65-2</id>
        <label>VGLL3</label>
    </interactant>
    <organismsDiffer>false</organismsDiffer>
    <experiments>3</experiments>
</comment>
<comment type="interaction">
    <interactant intactId="EBI-943588">
        <id>Q16633</id>
    </interactant>
    <interactant intactId="EBI-2559305">
        <id>A5D8V6</id>
        <label>VPS37C</label>
    </interactant>
    <organismsDiffer>false</organismsDiffer>
    <experiments>3</experiments>
</comment>
<comment type="interaction">
    <interactant intactId="EBI-943588">
        <id>Q16633</id>
    </interactant>
    <interactant intactId="EBI-744257">
        <id>Q96IQ9</id>
        <label>ZNF414</label>
    </interactant>
    <organismsDiffer>false</organismsDiffer>
    <experiments>3</experiments>
</comment>
<comment type="interaction">
    <interactant intactId="EBI-943588">
        <id>Q16633</id>
    </interactant>
    <interactant intactId="EBI-745520">
        <id>Q9P0T4</id>
        <label>ZNF581</label>
    </interactant>
    <organismsDiffer>false</organismsDiffer>
    <experiments>3</experiments>
</comment>
<comment type="subcellular location">
    <subcellularLocation>
        <location evidence="11">Nucleus</location>
    </subcellularLocation>
</comment>
<comment type="tissue specificity">
    <text evidence="6 7">B-cell specific (PubMed:7779176, PubMed:7859290). Detected in mainly in spleen, but also in thymus, periphral blood leukocyte and small intestine (PubMed:7779176, PubMed:7859290).</text>
</comment>
<comment type="domain">
    <text evidence="4">In the N-terminus possesses a conserved OCA domain for bivalent binding to class II POU domain-containing transcription factors and to an octamer DNA motif.</text>
</comment>
<comment type="PTM">
    <text evidence="12">Ubiquitinated; mediated by SIAH1 or SIAH2 and leading to its subsequent proteasomal degradation.</text>
</comment>
<comment type="disease">
    <text evidence="8">A chromosomal aberration involving POU2AF1/OBF1 may be a cause of a form of B-cell leukemia. Translocation t(3;11)(q27;q23) with BCL6.</text>
</comment>
<comment type="similarity">
    <text evidence="11">Belongs to the POU2AF family.</text>
</comment>
<comment type="online information" name="Atlas of Genetics and Cytogenetics in Oncology and Haematology">
    <link uri="https://atlasgeneticsoncology.org/gene/94/OBF"/>
</comment>
<proteinExistence type="evidence at protein level"/>
<name>OBF1_HUMAN</name>
<feature type="chain" id="PRO_0000058018" description="POU domain class 2-associating factor 1">
    <location>
        <begin position="1"/>
        <end position="256"/>
    </location>
</feature>
<feature type="domain" description="OCA" evidence="2 4">
    <location>
        <begin position="16"/>
        <end position="38"/>
    </location>
</feature>
<feature type="region of interest" description="Disordered" evidence="3">
    <location>
        <begin position="1"/>
        <end position="23"/>
    </location>
</feature>
<feature type="sequence variant" id="VAR_005521" description="In dbSNP:rs1042750.">
    <original>T</original>
    <variation>A</variation>
    <location>
        <position position="141"/>
    </location>
</feature>
<feature type="sequence variant" id="VAR_005522" description="In dbSNP:rs1042751.">
    <original>Q</original>
    <variation>R</variation>
    <location>
        <position position="194"/>
    </location>
</feature>
<feature type="helix" evidence="14">
    <location>
        <begin position="28"/>
        <end position="34"/>
    </location>
</feature>
<sequence>MLWQKPTAPEQAPAPARPYQGVRVKEPVKELLRRKRGHASSGAAPAPTAVVLPHQPLATYTTVGPSCLDMEGSVSAVTEEAALCAGWLSQPTPATLQPLAPWTPYTEYVPHEAVSCPYSADMYVQPVCPSYTVVGPSSVLTYASPPLITNVTTRSSATPAVGPPLEGPEHQAPLTYFPWPQPLSTLPTSTLQYQPPAPALPGPQFVQLPISIPEPVLQDMEDPRRAASSLTIDKLLLEEEDSDAYALNHTLSVEGF</sequence>
<accession>Q16633</accession>
<accession>B2R8Z9</accession>
<accession>Q14983</accession>
<keyword id="KW-0002">3D-structure</keyword>
<keyword id="KW-0010">Activator</keyword>
<keyword id="KW-0160">Chromosomal rearrangement</keyword>
<keyword id="KW-0903">Direct protein sequencing</keyword>
<keyword id="KW-0539">Nucleus</keyword>
<keyword id="KW-1267">Proteomics identification</keyword>
<keyword id="KW-0656">Proto-oncogene</keyword>
<keyword id="KW-1185">Reference proteome</keyword>
<keyword id="KW-0804">Transcription</keyword>
<keyword id="KW-0805">Transcription regulation</keyword>
<keyword id="KW-0832">Ubl conjugation</keyword>